<keyword id="KW-1003">Cell membrane</keyword>
<keyword id="KW-0472">Membrane</keyword>
<keyword id="KW-1185">Reference proteome</keyword>
<keyword id="KW-0812">Transmembrane</keyword>
<keyword id="KW-1133">Transmembrane helix</keyword>
<gene>
    <name type="ordered locus">ML1171</name>
    <name type="ORF">B1549_C3_240</name>
</gene>
<proteinExistence type="predicted"/>
<comment type="subcellular location">
    <subcellularLocation>
        <location evidence="2">Cell membrane</location>
        <topology evidence="2">Multi-pass membrane protein</topology>
    </subcellularLocation>
</comment>
<comment type="similarity">
    <text evidence="2">To M.tuberculosis Rv1337.</text>
</comment>
<comment type="sequence caution" evidence="2">
    <conflict type="erroneous initiation">
        <sequence resource="EMBL-CDS" id="CAC31552"/>
    </conflict>
</comment>
<protein>
    <recommendedName>
        <fullName>Uncharacterized protein ML1171</fullName>
    </recommendedName>
</protein>
<organism>
    <name type="scientific">Mycobacterium leprae (strain TN)</name>
    <dbReference type="NCBI Taxonomy" id="272631"/>
    <lineage>
        <taxon>Bacteria</taxon>
        <taxon>Bacillati</taxon>
        <taxon>Actinomycetota</taxon>
        <taxon>Actinomycetes</taxon>
        <taxon>Mycobacteriales</taxon>
        <taxon>Mycobacteriaceae</taxon>
        <taxon>Mycobacterium</taxon>
    </lineage>
</organism>
<name>Y1171_MYCLE</name>
<accession>P53426</accession>
<accession>Q9CC73</accession>
<feature type="chain" id="PRO_0000103813" description="Uncharacterized protein ML1171">
    <location>
        <begin position="1"/>
        <end position="251"/>
    </location>
</feature>
<feature type="transmembrane region" description="Helical" evidence="1">
    <location>
        <begin position="48"/>
        <end position="68"/>
    </location>
</feature>
<feature type="transmembrane region" description="Helical" evidence="1">
    <location>
        <begin position="88"/>
        <end position="108"/>
    </location>
</feature>
<feature type="transmembrane region" description="Helical" evidence="1">
    <location>
        <begin position="110"/>
        <end position="130"/>
    </location>
</feature>
<feature type="transmembrane region" description="Helical" evidence="1">
    <location>
        <begin position="132"/>
        <end position="152"/>
    </location>
</feature>
<feature type="transmembrane region" description="Helical" evidence="1">
    <location>
        <begin position="158"/>
        <end position="178"/>
    </location>
</feature>
<feature type="transmembrane region" description="Helical" evidence="1">
    <location>
        <begin position="184"/>
        <end position="204"/>
    </location>
</feature>
<feature type="transmembrane region" description="Helical" evidence="1">
    <location>
        <begin position="209"/>
        <end position="229"/>
    </location>
</feature>
<sequence>MTPTGDWYKGGDEVGAPSACGGGSALMTLPEKNLGYKPETETNRRLRWMVGGVTILTFMALLYLVELIDQLTRHSLDNNGIRLLKTDVLWGISFAPVLHANWQHLVANTIPLLVLGFLIALAGLSRFIWVTAMVWIFGGSATWLIGNMGSSFGPTDHIGVSGLIFGWLAFLLVFGLFVRRGWDIIGCMVLFAYGGVLLGVMPVLGRCGGVSWQGHLCGAISGVVAAYLLSAPERKTRALKEAGTDSPRLKT</sequence>
<evidence type="ECO:0000255" key="1"/>
<evidence type="ECO:0000305" key="2"/>
<dbReference type="EMBL" id="U00014">
    <property type="protein sequence ID" value="AAA50900.1"/>
    <property type="molecule type" value="Genomic_DNA"/>
</dbReference>
<dbReference type="EMBL" id="AL583921">
    <property type="protein sequence ID" value="CAC31552.1"/>
    <property type="status" value="ALT_INIT"/>
    <property type="molecule type" value="Genomic_DNA"/>
</dbReference>
<dbReference type="PIR" id="E87055">
    <property type="entry name" value="E87055"/>
</dbReference>
<dbReference type="PIR" id="S72791">
    <property type="entry name" value="S72791"/>
</dbReference>
<dbReference type="STRING" id="272631.gene:17575001"/>
<dbReference type="MEROPS" id="S54.029"/>
<dbReference type="KEGG" id="mle:ML1171"/>
<dbReference type="Leproma" id="ML1171"/>
<dbReference type="eggNOG" id="COG0705">
    <property type="taxonomic scope" value="Bacteria"/>
</dbReference>
<dbReference type="HOGENOM" id="CLU_067823_2_0_11"/>
<dbReference type="Proteomes" id="UP000000806">
    <property type="component" value="Chromosome"/>
</dbReference>
<dbReference type="GO" id="GO:0005886">
    <property type="term" value="C:plasma membrane"/>
    <property type="evidence" value="ECO:0007669"/>
    <property type="project" value="UniProtKB-SubCell"/>
</dbReference>
<dbReference type="GO" id="GO:0004252">
    <property type="term" value="F:serine-type endopeptidase activity"/>
    <property type="evidence" value="ECO:0007669"/>
    <property type="project" value="InterPro"/>
</dbReference>
<dbReference type="Gene3D" id="1.20.1540.10">
    <property type="entry name" value="Rhomboid-like"/>
    <property type="match status" value="1"/>
</dbReference>
<dbReference type="InterPro" id="IPR022764">
    <property type="entry name" value="Peptidase_S54_rhomboid_dom"/>
</dbReference>
<dbReference type="InterPro" id="IPR035952">
    <property type="entry name" value="Rhomboid-like_sf"/>
</dbReference>
<dbReference type="InterPro" id="IPR050925">
    <property type="entry name" value="Rhomboid_protease_S54"/>
</dbReference>
<dbReference type="PANTHER" id="PTHR43731">
    <property type="entry name" value="RHOMBOID PROTEASE"/>
    <property type="match status" value="1"/>
</dbReference>
<dbReference type="PANTHER" id="PTHR43731:SF9">
    <property type="entry name" value="SLR1461 PROTEIN"/>
    <property type="match status" value="1"/>
</dbReference>
<dbReference type="Pfam" id="PF01694">
    <property type="entry name" value="Rhomboid"/>
    <property type="match status" value="1"/>
</dbReference>
<dbReference type="SUPFAM" id="SSF144091">
    <property type="entry name" value="Rhomboid-like"/>
    <property type="match status" value="1"/>
</dbReference>
<reference key="1">
    <citation type="submission" date="1994-09" db="EMBL/GenBank/DDBJ databases">
        <authorList>
            <person name="Smith D.R."/>
            <person name="Robison K."/>
        </authorList>
    </citation>
    <scope>NUCLEOTIDE SEQUENCE [GENOMIC DNA]</scope>
</reference>
<reference key="2">
    <citation type="journal article" date="2001" name="Nature">
        <title>Massive gene decay in the leprosy bacillus.</title>
        <authorList>
            <person name="Cole S.T."/>
            <person name="Eiglmeier K."/>
            <person name="Parkhill J."/>
            <person name="James K.D."/>
            <person name="Thomson N.R."/>
            <person name="Wheeler P.R."/>
            <person name="Honore N."/>
            <person name="Garnier T."/>
            <person name="Churcher C.M."/>
            <person name="Harris D.E."/>
            <person name="Mungall K.L."/>
            <person name="Basham D."/>
            <person name="Brown D."/>
            <person name="Chillingworth T."/>
            <person name="Connor R."/>
            <person name="Davies R.M."/>
            <person name="Devlin K."/>
            <person name="Duthoy S."/>
            <person name="Feltwell T."/>
            <person name="Fraser A."/>
            <person name="Hamlin N."/>
            <person name="Holroyd S."/>
            <person name="Hornsby T."/>
            <person name="Jagels K."/>
            <person name="Lacroix C."/>
            <person name="Maclean J."/>
            <person name="Moule S."/>
            <person name="Murphy L.D."/>
            <person name="Oliver K."/>
            <person name="Quail M.A."/>
            <person name="Rajandream M.A."/>
            <person name="Rutherford K.M."/>
            <person name="Rutter S."/>
            <person name="Seeger K."/>
            <person name="Simon S."/>
            <person name="Simmonds M."/>
            <person name="Skelton J."/>
            <person name="Squares R."/>
            <person name="Squares S."/>
            <person name="Stevens K."/>
            <person name="Taylor K."/>
            <person name="Whitehead S."/>
            <person name="Woodward J.R."/>
            <person name="Barrell B.G."/>
        </authorList>
    </citation>
    <scope>NUCLEOTIDE SEQUENCE [LARGE SCALE GENOMIC DNA]</scope>
    <source>
        <strain>TN</strain>
    </source>
</reference>